<proteinExistence type="inferred from homology"/>
<sequence>MFHKLLNKSEILAYDKKYVNNYIINVENLSFFYSKEKVIDDISFQVKFGEIVTILGPNGGGKTTLIRILVGIYRNYIGVIKYAKNFIIGYLPQHFSVNSLIPMTVKYFLNSSYTKSKRKLKLSDVLKDINIEKILDRQMSEISHGELQLVLLARCLMLNPDIIILDEPVSCMDVNAKDSFYKLINKLISIYNLSVIMTSHDLHFVMSNSYRVICINRSIYCEGSPSEIVKNEKFLKMFSSYA</sequence>
<accession>Q2GFZ6</accession>
<name>ZNUC_EHRCR</name>
<gene>
    <name evidence="1" type="primary">znuC</name>
    <name type="ordered locus">ECH_0841</name>
</gene>
<keyword id="KW-0067">ATP-binding</keyword>
<keyword id="KW-0997">Cell inner membrane</keyword>
<keyword id="KW-1003">Cell membrane</keyword>
<keyword id="KW-0406">Ion transport</keyword>
<keyword id="KW-0472">Membrane</keyword>
<keyword id="KW-0547">Nucleotide-binding</keyword>
<keyword id="KW-1185">Reference proteome</keyword>
<keyword id="KW-1278">Translocase</keyword>
<keyword id="KW-0813">Transport</keyword>
<keyword id="KW-0862">Zinc</keyword>
<keyword id="KW-0864">Zinc transport</keyword>
<feature type="chain" id="PRO_0000281501" description="Zinc import ATP-binding protein ZnuC">
    <location>
        <begin position="1"/>
        <end position="242"/>
    </location>
</feature>
<feature type="domain" description="ABC transporter" evidence="1">
    <location>
        <begin position="24"/>
        <end position="241"/>
    </location>
</feature>
<feature type="binding site" evidence="1">
    <location>
        <begin position="56"/>
        <end position="63"/>
    </location>
    <ligand>
        <name>ATP</name>
        <dbReference type="ChEBI" id="CHEBI:30616"/>
    </ligand>
</feature>
<evidence type="ECO:0000255" key="1">
    <source>
        <dbReference type="HAMAP-Rule" id="MF_01725"/>
    </source>
</evidence>
<reference key="1">
    <citation type="journal article" date="2006" name="PLoS Genet.">
        <title>Comparative genomics of emerging human ehrlichiosis agents.</title>
        <authorList>
            <person name="Dunning Hotopp J.C."/>
            <person name="Lin M."/>
            <person name="Madupu R."/>
            <person name="Crabtree J."/>
            <person name="Angiuoli S.V."/>
            <person name="Eisen J.A."/>
            <person name="Seshadri R."/>
            <person name="Ren Q."/>
            <person name="Wu M."/>
            <person name="Utterback T.R."/>
            <person name="Smith S."/>
            <person name="Lewis M."/>
            <person name="Khouri H."/>
            <person name="Zhang C."/>
            <person name="Niu H."/>
            <person name="Lin Q."/>
            <person name="Ohashi N."/>
            <person name="Zhi N."/>
            <person name="Nelson W.C."/>
            <person name="Brinkac L.M."/>
            <person name="Dodson R.J."/>
            <person name="Rosovitz M.J."/>
            <person name="Sundaram J.P."/>
            <person name="Daugherty S.C."/>
            <person name="Davidsen T."/>
            <person name="Durkin A.S."/>
            <person name="Gwinn M.L."/>
            <person name="Haft D.H."/>
            <person name="Selengut J.D."/>
            <person name="Sullivan S.A."/>
            <person name="Zafar N."/>
            <person name="Zhou L."/>
            <person name="Benahmed F."/>
            <person name="Forberger H."/>
            <person name="Halpin R."/>
            <person name="Mulligan S."/>
            <person name="Robinson J."/>
            <person name="White O."/>
            <person name="Rikihisa Y."/>
            <person name="Tettelin H."/>
        </authorList>
    </citation>
    <scope>NUCLEOTIDE SEQUENCE [LARGE SCALE GENOMIC DNA]</scope>
    <source>
        <strain>ATCC CRL-10679 / Arkansas</strain>
    </source>
</reference>
<comment type="function">
    <text evidence="1">Part of the ABC transporter complex ZnuABC involved in zinc import. Responsible for energy coupling to the transport system.</text>
</comment>
<comment type="catalytic activity">
    <reaction evidence="1">
        <text>Zn(2+)(out) + ATP(in) + H2O(in) = Zn(2+)(in) + ADP(in) + phosphate(in) + H(+)(in)</text>
        <dbReference type="Rhea" id="RHEA:29795"/>
        <dbReference type="ChEBI" id="CHEBI:15377"/>
        <dbReference type="ChEBI" id="CHEBI:15378"/>
        <dbReference type="ChEBI" id="CHEBI:29105"/>
        <dbReference type="ChEBI" id="CHEBI:30616"/>
        <dbReference type="ChEBI" id="CHEBI:43474"/>
        <dbReference type="ChEBI" id="CHEBI:456216"/>
        <dbReference type="EC" id="7.2.2.20"/>
    </reaction>
</comment>
<comment type="subunit">
    <text evidence="1">The complex is composed of two ATP-binding proteins (ZnuC), two transmembrane proteins (ZnuB) and a solute-binding protein (ZnuA).</text>
</comment>
<comment type="subcellular location">
    <subcellularLocation>
        <location evidence="1">Cell inner membrane</location>
        <topology evidence="1">Peripheral membrane protein</topology>
    </subcellularLocation>
</comment>
<comment type="similarity">
    <text evidence="1">Belongs to the ABC transporter superfamily. Zinc importer (TC 3.A.1.15.5) family.</text>
</comment>
<protein>
    <recommendedName>
        <fullName evidence="1">Zinc import ATP-binding protein ZnuC</fullName>
        <ecNumber evidence="1">7.2.2.20</ecNumber>
    </recommendedName>
</protein>
<organism>
    <name type="scientific">Ehrlichia chaffeensis (strain ATCC CRL-10679 / Arkansas)</name>
    <dbReference type="NCBI Taxonomy" id="205920"/>
    <lineage>
        <taxon>Bacteria</taxon>
        <taxon>Pseudomonadati</taxon>
        <taxon>Pseudomonadota</taxon>
        <taxon>Alphaproteobacteria</taxon>
        <taxon>Rickettsiales</taxon>
        <taxon>Anaplasmataceae</taxon>
        <taxon>Ehrlichia</taxon>
    </lineage>
</organism>
<dbReference type="EC" id="7.2.2.20" evidence="1"/>
<dbReference type="EMBL" id="CP000236">
    <property type="protein sequence ID" value="ABD45148.1"/>
    <property type="molecule type" value="Genomic_DNA"/>
</dbReference>
<dbReference type="RefSeq" id="WP_011452844.1">
    <property type="nucleotide sequence ID" value="NC_007799.1"/>
</dbReference>
<dbReference type="SMR" id="Q2GFZ6"/>
<dbReference type="STRING" id="205920.ECH_0841"/>
<dbReference type="KEGG" id="ech:ECH_0841"/>
<dbReference type="eggNOG" id="COG1121">
    <property type="taxonomic scope" value="Bacteria"/>
</dbReference>
<dbReference type="HOGENOM" id="CLU_000604_1_11_5"/>
<dbReference type="OrthoDB" id="9780942at2"/>
<dbReference type="Proteomes" id="UP000008320">
    <property type="component" value="Chromosome"/>
</dbReference>
<dbReference type="GO" id="GO:0005886">
    <property type="term" value="C:plasma membrane"/>
    <property type="evidence" value="ECO:0007669"/>
    <property type="project" value="UniProtKB-SubCell"/>
</dbReference>
<dbReference type="GO" id="GO:0015633">
    <property type="term" value="F:ABC-type zinc transporter activity"/>
    <property type="evidence" value="ECO:0007669"/>
    <property type="project" value="UniProtKB-EC"/>
</dbReference>
<dbReference type="GO" id="GO:0005524">
    <property type="term" value="F:ATP binding"/>
    <property type="evidence" value="ECO:0007669"/>
    <property type="project" value="UniProtKB-KW"/>
</dbReference>
<dbReference type="GO" id="GO:0016887">
    <property type="term" value="F:ATP hydrolysis activity"/>
    <property type="evidence" value="ECO:0007669"/>
    <property type="project" value="InterPro"/>
</dbReference>
<dbReference type="Gene3D" id="3.40.50.300">
    <property type="entry name" value="P-loop containing nucleotide triphosphate hydrolases"/>
    <property type="match status" value="1"/>
</dbReference>
<dbReference type="InterPro" id="IPR003593">
    <property type="entry name" value="AAA+_ATPase"/>
</dbReference>
<dbReference type="InterPro" id="IPR003439">
    <property type="entry name" value="ABC_transporter-like_ATP-bd"/>
</dbReference>
<dbReference type="InterPro" id="IPR017871">
    <property type="entry name" value="ABC_transporter-like_CS"/>
</dbReference>
<dbReference type="InterPro" id="IPR050153">
    <property type="entry name" value="Metal_Ion_Import_ABC"/>
</dbReference>
<dbReference type="InterPro" id="IPR027417">
    <property type="entry name" value="P-loop_NTPase"/>
</dbReference>
<dbReference type="PANTHER" id="PTHR42734">
    <property type="entry name" value="METAL TRANSPORT SYSTEM ATP-BINDING PROTEIN TM_0124-RELATED"/>
    <property type="match status" value="1"/>
</dbReference>
<dbReference type="PANTHER" id="PTHR42734:SF17">
    <property type="entry name" value="METAL TRANSPORT SYSTEM ATP-BINDING PROTEIN TM_0124-RELATED"/>
    <property type="match status" value="1"/>
</dbReference>
<dbReference type="Pfam" id="PF00005">
    <property type="entry name" value="ABC_tran"/>
    <property type="match status" value="1"/>
</dbReference>
<dbReference type="SMART" id="SM00382">
    <property type="entry name" value="AAA"/>
    <property type="match status" value="1"/>
</dbReference>
<dbReference type="SUPFAM" id="SSF52540">
    <property type="entry name" value="P-loop containing nucleoside triphosphate hydrolases"/>
    <property type="match status" value="1"/>
</dbReference>
<dbReference type="PROSITE" id="PS00211">
    <property type="entry name" value="ABC_TRANSPORTER_1"/>
    <property type="match status" value="1"/>
</dbReference>
<dbReference type="PROSITE" id="PS50893">
    <property type="entry name" value="ABC_TRANSPORTER_2"/>
    <property type="match status" value="1"/>
</dbReference>
<dbReference type="PROSITE" id="PS51298">
    <property type="entry name" value="ZNUC"/>
    <property type="match status" value="1"/>
</dbReference>